<name>RT19_NEUCR</name>
<reference key="1">
    <citation type="journal article" date="2003" name="Nature">
        <title>The genome sequence of the filamentous fungus Neurospora crassa.</title>
        <authorList>
            <person name="Galagan J.E."/>
            <person name="Calvo S.E."/>
            <person name="Borkovich K.A."/>
            <person name="Selker E.U."/>
            <person name="Read N.D."/>
            <person name="Jaffe D.B."/>
            <person name="FitzHugh W."/>
            <person name="Ma L.-J."/>
            <person name="Smirnov S."/>
            <person name="Purcell S."/>
            <person name="Rehman B."/>
            <person name="Elkins T."/>
            <person name="Engels R."/>
            <person name="Wang S."/>
            <person name="Nielsen C.B."/>
            <person name="Butler J."/>
            <person name="Endrizzi M."/>
            <person name="Qui D."/>
            <person name="Ianakiev P."/>
            <person name="Bell-Pedersen D."/>
            <person name="Nelson M.A."/>
            <person name="Werner-Washburne M."/>
            <person name="Selitrennikoff C.P."/>
            <person name="Kinsey J.A."/>
            <person name="Braun E.L."/>
            <person name="Zelter A."/>
            <person name="Schulte U."/>
            <person name="Kothe G.O."/>
            <person name="Jedd G."/>
            <person name="Mewes H.-W."/>
            <person name="Staben C."/>
            <person name="Marcotte E."/>
            <person name="Greenberg D."/>
            <person name="Roy A."/>
            <person name="Foley K."/>
            <person name="Naylor J."/>
            <person name="Stange-Thomann N."/>
            <person name="Barrett R."/>
            <person name="Gnerre S."/>
            <person name="Kamal M."/>
            <person name="Kamvysselis M."/>
            <person name="Mauceli E.W."/>
            <person name="Bielke C."/>
            <person name="Rudd S."/>
            <person name="Frishman D."/>
            <person name="Krystofova S."/>
            <person name="Rasmussen C."/>
            <person name="Metzenberg R.L."/>
            <person name="Perkins D.D."/>
            <person name="Kroken S."/>
            <person name="Cogoni C."/>
            <person name="Macino G."/>
            <person name="Catcheside D.E.A."/>
            <person name="Li W."/>
            <person name="Pratt R.J."/>
            <person name="Osmani S.A."/>
            <person name="DeSouza C.P.C."/>
            <person name="Glass N.L."/>
            <person name="Orbach M.J."/>
            <person name="Berglund J.A."/>
            <person name="Voelker R."/>
            <person name="Yarden O."/>
            <person name="Plamann M."/>
            <person name="Seiler S."/>
            <person name="Dunlap J.C."/>
            <person name="Radford A."/>
            <person name="Aramayo R."/>
            <person name="Natvig D.O."/>
            <person name="Alex L.A."/>
            <person name="Mannhaupt G."/>
            <person name="Ebbole D.J."/>
            <person name="Freitag M."/>
            <person name="Paulsen I."/>
            <person name="Sachs M.S."/>
            <person name="Lander E.S."/>
            <person name="Nusbaum C."/>
            <person name="Birren B.W."/>
        </authorList>
    </citation>
    <scope>NUCLEOTIDE SEQUENCE [LARGE SCALE GENOMIC DNA]</scope>
    <source>
        <strain>ATCC 24698 / 74-OR23-1A / CBS 708.71 / DSM 1257 / FGSC 987</strain>
    </source>
</reference>
<reference evidence="5 6" key="2">
    <citation type="journal article" date="2020" name="Nat. Commun.">
        <title>Analysis of translating mitoribosome reveals functional characteristics of translation in mitochondria of fungi.</title>
        <authorList>
            <person name="Itoh Y."/>
            <person name="Naschberger A."/>
            <person name="Mortezaei N."/>
            <person name="Herrmann J.M."/>
            <person name="Amunts A."/>
        </authorList>
    </citation>
    <scope>STRUCTURE BY ELECTRON MICROSCOPY (2.85 ANGSTROMS)</scope>
</reference>
<comment type="function">
    <text evidence="4">Component of the mitochondrial ribosome (mitoribosome), a dedicated translation machinery responsible for the synthesis of mitochondrial genome-encoded proteins, including at least some of the essential transmembrane subunits of the mitochondrial respiratory chain. The mitoribosomes are attached to the mitochondrial inner membrane and translation products are cotranslationally integrated into the membrane.</text>
</comment>
<comment type="subunit">
    <text evidence="1">Component of the mitochondrial small ribosomal subunit (mt-SSU). Mature N.crassa 74S mitochondrial ribosomes consist of a small (37S) and a large (54S) subunit. The 37S small subunit contains a 16S ribosomal RNA (16S mt-rRNA) and 32 different proteins. The 54S large subunit contains a 23S rRNA (23S mt-rRNA) and 42 different proteins.</text>
</comment>
<comment type="subcellular location">
    <subcellularLocation>
        <location evidence="1">Mitochondrion</location>
    </subcellularLocation>
</comment>
<comment type="similarity">
    <text evidence="3">Belongs to the universal ribosomal protein uS19 family.</text>
</comment>
<dbReference type="EMBL" id="CM002237">
    <property type="protein sequence ID" value="EAA34353.2"/>
    <property type="molecule type" value="Genomic_DNA"/>
</dbReference>
<dbReference type="RefSeq" id="XP_963589.2">
    <property type="nucleotide sequence ID" value="XM_958496.3"/>
</dbReference>
<dbReference type="PDB" id="6YW5">
    <property type="method" value="EM"/>
    <property type="resolution" value="2.85 A"/>
    <property type="chains" value="SS=1-91"/>
</dbReference>
<dbReference type="PDB" id="6YWX">
    <property type="method" value="EM"/>
    <property type="resolution" value="3.10 A"/>
    <property type="chains" value="SS=1-91"/>
</dbReference>
<dbReference type="PDBsum" id="6YW5"/>
<dbReference type="PDBsum" id="6YWX"/>
<dbReference type="EMDB" id="EMD-10958"/>
<dbReference type="EMDB" id="EMD-10978"/>
<dbReference type="SMR" id="Q1K8V2"/>
<dbReference type="FunCoup" id="Q1K8V2">
    <property type="interactions" value="109"/>
</dbReference>
<dbReference type="STRING" id="367110.Q1K8V2"/>
<dbReference type="PaxDb" id="5141-EFNCRP00000008594"/>
<dbReference type="EnsemblFungi" id="EAA34353">
    <property type="protein sequence ID" value="EAA34353"/>
    <property type="gene ID" value="NCU08728"/>
</dbReference>
<dbReference type="GeneID" id="3879752"/>
<dbReference type="KEGG" id="ncr:NCU08728"/>
<dbReference type="VEuPathDB" id="FungiDB:NCU08728"/>
<dbReference type="InParanoid" id="Q1K8V2"/>
<dbReference type="OrthoDB" id="2043at2759"/>
<dbReference type="Proteomes" id="UP000001805">
    <property type="component" value="Chromosome 6, Linkage Group II"/>
</dbReference>
<dbReference type="GO" id="GO:0005763">
    <property type="term" value="C:mitochondrial small ribosomal subunit"/>
    <property type="evidence" value="ECO:0000318"/>
    <property type="project" value="GO_Central"/>
</dbReference>
<dbReference type="GO" id="GO:0003723">
    <property type="term" value="F:RNA binding"/>
    <property type="evidence" value="ECO:0007669"/>
    <property type="project" value="InterPro"/>
</dbReference>
<dbReference type="GO" id="GO:0003735">
    <property type="term" value="F:structural constituent of ribosome"/>
    <property type="evidence" value="ECO:0000318"/>
    <property type="project" value="GO_Central"/>
</dbReference>
<dbReference type="GO" id="GO:0000028">
    <property type="term" value="P:ribosomal small subunit assembly"/>
    <property type="evidence" value="ECO:0000318"/>
    <property type="project" value="GO_Central"/>
</dbReference>
<dbReference type="GO" id="GO:0006412">
    <property type="term" value="P:translation"/>
    <property type="evidence" value="ECO:0007669"/>
    <property type="project" value="InterPro"/>
</dbReference>
<dbReference type="FunFam" id="3.30.860.10:FF:000001">
    <property type="entry name" value="30S ribosomal protein S19"/>
    <property type="match status" value="1"/>
</dbReference>
<dbReference type="Gene3D" id="3.30.860.10">
    <property type="entry name" value="30s Ribosomal Protein S19, Chain A"/>
    <property type="match status" value="1"/>
</dbReference>
<dbReference type="HAMAP" id="MF_00531">
    <property type="entry name" value="Ribosomal_uS19"/>
    <property type="match status" value="1"/>
</dbReference>
<dbReference type="InterPro" id="IPR002222">
    <property type="entry name" value="Ribosomal_uS19"/>
</dbReference>
<dbReference type="InterPro" id="IPR020934">
    <property type="entry name" value="Ribosomal_uS19_CS"/>
</dbReference>
<dbReference type="InterPro" id="IPR023575">
    <property type="entry name" value="Ribosomal_uS19_SF"/>
</dbReference>
<dbReference type="PANTHER" id="PTHR11880">
    <property type="entry name" value="RIBOSOMAL PROTEIN S19P FAMILY MEMBER"/>
    <property type="match status" value="1"/>
</dbReference>
<dbReference type="PANTHER" id="PTHR11880:SF8">
    <property type="entry name" value="SMALL RIBOSOMAL SUBUNIT PROTEIN US19M"/>
    <property type="match status" value="1"/>
</dbReference>
<dbReference type="Pfam" id="PF00203">
    <property type="entry name" value="Ribosomal_S19"/>
    <property type="match status" value="1"/>
</dbReference>
<dbReference type="PIRSF" id="PIRSF002144">
    <property type="entry name" value="Ribosomal_S19"/>
    <property type="match status" value="1"/>
</dbReference>
<dbReference type="PRINTS" id="PR00975">
    <property type="entry name" value="RIBOSOMALS19"/>
</dbReference>
<dbReference type="SUPFAM" id="SSF54570">
    <property type="entry name" value="Ribosomal protein S19"/>
    <property type="match status" value="1"/>
</dbReference>
<dbReference type="PROSITE" id="PS00323">
    <property type="entry name" value="RIBOSOMAL_S19"/>
    <property type="match status" value="1"/>
</dbReference>
<sequence>MQPTRVLFKRSVWKGPHIVPLPIQRPEPGKKIAPIRTQARSATILPNFVGLKFQVHNGKDYIDLTVTEEMVGHKLGEFSATRKPFIWGKKK</sequence>
<protein>
    <recommendedName>
        <fullName evidence="2">Small ribosomal subunit protein uS19m</fullName>
    </recommendedName>
</protein>
<organism>
    <name type="scientific">Neurospora crassa (strain ATCC 24698 / 74-OR23-1A / CBS 708.71 / DSM 1257 / FGSC 987)</name>
    <dbReference type="NCBI Taxonomy" id="367110"/>
    <lineage>
        <taxon>Eukaryota</taxon>
        <taxon>Fungi</taxon>
        <taxon>Dikarya</taxon>
        <taxon>Ascomycota</taxon>
        <taxon>Pezizomycotina</taxon>
        <taxon>Sordariomycetes</taxon>
        <taxon>Sordariomycetidae</taxon>
        <taxon>Sordariales</taxon>
        <taxon>Sordariaceae</taxon>
        <taxon>Neurospora</taxon>
    </lineage>
</organism>
<gene>
    <name type="primary">rsm19</name>
    <name type="ORF">NCU08728</name>
</gene>
<proteinExistence type="evidence at protein level"/>
<evidence type="ECO:0000269" key="1">
    <source>
    </source>
</evidence>
<evidence type="ECO:0000303" key="2">
    <source>
    </source>
</evidence>
<evidence type="ECO:0000305" key="3"/>
<evidence type="ECO:0000305" key="4">
    <source>
    </source>
</evidence>
<evidence type="ECO:0007744" key="5">
    <source>
        <dbReference type="PDB" id="6YW5"/>
    </source>
</evidence>
<evidence type="ECO:0007744" key="6">
    <source>
        <dbReference type="PDB" id="6YWX"/>
    </source>
</evidence>
<accession>Q1K8V2</accession>
<feature type="chain" id="PRO_0000458581" description="Small ribosomal subunit protein uS19m">
    <location>
        <begin position="1"/>
        <end position="91"/>
    </location>
</feature>
<keyword id="KW-0002">3D-structure</keyword>
<keyword id="KW-0496">Mitochondrion</keyword>
<keyword id="KW-1185">Reference proteome</keyword>
<keyword id="KW-0687">Ribonucleoprotein</keyword>
<keyword id="KW-0689">Ribosomal protein</keyword>